<name>LEU1_CAUVN</name>
<proteinExistence type="inferred from homology"/>
<sequence>MTSVPAGAISKRDNVVVFDTTMRDGEQSPGASMSLEEKLELAKILEEMGVDVIEAGFPIASNGDFEAVRQIAELITESTVCGLARAAAGDIDRCAEAVRRAKRGRIHTFISTSPVHMKYKLQMEPDAVLEAITRSVSHARNLVGDVEWSAEDATRTERDFLKRCVEAAIKAGATTINLPDTVGYSYPSEYGELFRDVITSVPGADKAIFSAHCHNDLGLAVANSIAAIEGGARQVEVAINGIGERAGNAALEEIVMALRVRGDHLPYGTSVDPVHITRASRYVSAITGFPVQFNKAIVGKNAFAHESGIHQDGMLKNAETYEIMKPEDVGQGATNLVMGKHSGRHAFREKLKALGYELGQNALNDAFGRFKELADKKKHVFDDDIVALVDDALARGSEKIRVSRLRVVAGTDGQSAELTLDIDGVASTAEATGDGPVDAVFNAIHKIVPHSAALRLFQVHAVTEGTDAQAQVSVRLEEDGRIATGAAADTDTLTASAKAYVNALNNLFARKEKSRPEAAIASGF</sequence>
<comment type="function">
    <text evidence="1">Catalyzes the condensation of the acetyl group of acetyl-CoA with 3-methyl-2-oxobutanoate (2-ketoisovalerate) to form 3-carboxy-3-hydroxy-4-methylpentanoate (2-isopropylmalate).</text>
</comment>
<comment type="catalytic activity">
    <reaction evidence="1">
        <text>3-methyl-2-oxobutanoate + acetyl-CoA + H2O = (2S)-2-isopropylmalate + CoA + H(+)</text>
        <dbReference type="Rhea" id="RHEA:21524"/>
        <dbReference type="ChEBI" id="CHEBI:1178"/>
        <dbReference type="ChEBI" id="CHEBI:11851"/>
        <dbReference type="ChEBI" id="CHEBI:15377"/>
        <dbReference type="ChEBI" id="CHEBI:15378"/>
        <dbReference type="ChEBI" id="CHEBI:57287"/>
        <dbReference type="ChEBI" id="CHEBI:57288"/>
        <dbReference type="EC" id="2.3.3.13"/>
    </reaction>
</comment>
<comment type="cofactor">
    <cofactor evidence="1">
        <name>Mn(2+)</name>
        <dbReference type="ChEBI" id="CHEBI:29035"/>
    </cofactor>
</comment>
<comment type="pathway">
    <text evidence="1">Amino-acid biosynthesis; L-leucine biosynthesis; L-leucine from 3-methyl-2-oxobutanoate: step 1/4.</text>
</comment>
<comment type="subunit">
    <text evidence="1">Homodimer.</text>
</comment>
<comment type="subcellular location">
    <subcellularLocation>
        <location evidence="1">Cytoplasm</location>
    </subcellularLocation>
</comment>
<comment type="similarity">
    <text evidence="1">Belongs to the alpha-IPM synthase/homocitrate synthase family. LeuA type 1 subfamily.</text>
</comment>
<gene>
    <name evidence="1" type="primary">leuA</name>
    <name type="ordered locus">CCNA_01610</name>
</gene>
<reference key="1">
    <citation type="journal article" date="2010" name="J. Bacteriol.">
        <title>The genetic basis of laboratory adaptation in Caulobacter crescentus.</title>
        <authorList>
            <person name="Marks M.E."/>
            <person name="Castro-Rojas C.M."/>
            <person name="Teiling C."/>
            <person name="Du L."/>
            <person name="Kapatral V."/>
            <person name="Walunas T.L."/>
            <person name="Crosson S."/>
        </authorList>
    </citation>
    <scope>NUCLEOTIDE SEQUENCE [LARGE SCALE GENOMIC DNA]</scope>
    <source>
        <strain>NA1000 / CB15N</strain>
    </source>
</reference>
<organism>
    <name type="scientific">Caulobacter vibrioides (strain NA1000 / CB15N)</name>
    <name type="common">Caulobacter crescentus</name>
    <dbReference type="NCBI Taxonomy" id="565050"/>
    <lineage>
        <taxon>Bacteria</taxon>
        <taxon>Pseudomonadati</taxon>
        <taxon>Pseudomonadota</taxon>
        <taxon>Alphaproteobacteria</taxon>
        <taxon>Caulobacterales</taxon>
        <taxon>Caulobacteraceae</taxon>
        <taxon>Caulobacter</taxon>
    </lineage>
</organism>
<protein>
    <recommendedName>
        <fullName evidence="1">2-isopropylmalate synthase</fullName>
        <ecNumber evidence="1">2.3.3.13</ecNumber>
    </recommendedName>
    <alternativeName>
        <fullName evidence="1">Alpha-IPM synthase</fullName>
    </alternativeName>
    <alternativeName>
        <fullName evidence="1">Alpha-isopropylmalate synthase</fullName>
    </alternativeName>
</protein>
<evidence type="ECO:0000255" key="1">
    <source>
        <dbReference type="HAMAP-Rule" id="MF_01025"/>
    </source>
</evidence>
<feature type="chain" id="PRO_1000149166" description="2-isopropylmalate synthase">
    <location>
        <begin position="1"/>
        <end position="524"/>
    </location>
</feature>
<feature type="domain" description="Pyruvate carboxyltransferase" evidence="1">
    <location>
        <begin position="15"/>
        <end position="275"/>
    </location>
</feature>
<feature type="region of interest" description="Regulatory domain" evidence="1">
    <location>
        <begin position="401"/>
        <end position="524"/>
    </location>
</feature>
<feature type="binding site" evidence="1">
    <location>
        <position position="24"/>
    </location>
    <ligand>
        <name>Mn(2+)</name>
        <dbReference type="ChEBI" id="CHEBI:29035"/>
    </ligand>
</feature>
<feature type="binding site" evidence="1">
    <location>
        <position position="212"/>
    </location>
    <ligand>
        <name>Mn(2+)</name>
        <dbReference type="ChEBI" id="CHEBI:29035"/>
    </ligand>
</feature>
<feature type="binding site" evidence="1">
    <location>
        <position position="214"/>
    </location>
    <ligand>
        <name>Mn(2+)</name>
        <dbReference type="ChEBI" id="CHEBI:29035"/>
    </ligand>
</feature>
<feature type="binding site" evidence="1">
    <location>
        <position position="248"/>
    </location>
    <ligand>
        <name>Mn(2+)</name>
        <dbReference type="ChEBI" id="CHEBI:29035"/>
    </ligand>
</feature>
<accession>B8H607</accession>
<keyword id="KW-0028">Amino-acid biosynthesis</keyword>
<keyword id="KW-0100">Branched-chain amino acid biosynthesis</keyword>
<keyword id="KW-0963">Cytoplasm</keyword>
<keyword id="KW-0432">Leucine biosynthesis</keyword>
<keyword id="KW-0464">Manganese</keyword>
<keyword id="KW-0479">Metal-binding</keyword>
<keyword id="KW-1185">Reference proteome</keyword>
<keyword id="KW-0808">Transferase</keyword>
<dbReference type="EC" id="2.3.3.13" evidence="1"/>
<dbReference type="EMBL" id="CP001340">
    <property type="protein sequence ID" value="ACL95075.1"/>
    <property type="molecule type" value="Genomic_DNA"/>
</dbReference>
<dbReference type="RefSeq" id="WP_010919415.1">
    <property type="nucleotide sequence ID" value="NC_011916.1"/>
</dbReference>
<dbReference type="RefSeq" id="YP_002516983.1">
    <property type="nucleotide sequence ID" value="NC_011916.1"/>
</dbReference>
<dbReference type="SMR" id="B8H607"/>
<dbReference type="GeneID" id="7331588"/>
<dbReference type="KEGG" id="ccs:CCNA_01610"/>
<dbReference type="PATRIC" id="fig|565050.3.peg.1588"/>
<dbReference type="HOGENOM" id="CLU_022158_0_1_5"/>
<dbReference type="OrthoDB" id="9803573at2"/>
<dbReference type="PhylomeDB" id="B8H607"/>
<dbReference type="UniPathway" id="UPA00048">
    <property type="reaction ID" value="UER00070"/>
</dbReference>
<dbReference type="Proteomes" id="UP000001364">
    <property type="component" value="Chromosome"/>
</dbReference>
<dbReference type="GO" id="GO:0005829">
    <property type="term" value="C:cytosol"/>
    <property type="evidence" value="ECO:0007669"/>
    <property type="project" value="TreeGrafter"/>
</dbReference>
<dbReference type="GO" id="GO:0003852">
    <property type="term" value="F:2-isopropylmalate synthase activity"/>
    <property type="evidence" value="ECO:0007669"/>
    <property type="project" value="UniProtKB-UniRule"/>
</dbReference>
<dbReference type="GO" id="GO:0003985">
    <property type="term" value="F:acetyl-CoA C-acetyltransferase activity"/>
    <property type="evidence" value="ECO:0007669"/>
    <property type="project" value="UniProtKB-UniRule"/>
</dbReference>
<dbReference type="GO" id="GO:0030145">
    <property type="term" value="F:manganese ion binding"/>
    <property type="evidence" value="ECO:0007669"/>
    <property type="project" value="UniProtKB-UniRule"/>
</dbReference>
<dbReference type="GO" id="GO:0009098">
    <property type="term" value="P:L-leucine biosynthetic process"/>
    <property type="evidence" value="ECO:0007669"/>
    <property type="project" value="UniProtKB-UniRule"/>
</dbReference>
<dbReference type="CDD" id="cd07940">
    <property type="entry name" value="DRE_TIM_IPMS"/>
    <property type="match status" value="1"/>
</dbReference>
<dbReference type="FunFam" id="1.10.238.260:FF:000001">
    <property type="entry name" value="2-isopropylmalate synthase"/>
    <property type="match status" value="1"/>
</dbReference>
<dbReference type="FunFam" id="3.20.20.70:FF:000010">
    <property type="entry name" value="2-isopropylmalate synthase"/>
    <property type="match status" value="1"/>
</dbReference>
<dbReference type="FunFam" id="3.30.160.270:FF:000003">
    <property type="entry name" value="2-isopropylmalate synthase"/>
    <property type="match status" value="1"/>
</dbReference>
<dbReference type="Gene3D" id="3.30.160.270">
    <property type="match status" value="1"/>
</dbReference>
<dbReference type="Gene3D" id="3.20.20.70">
    <property type="entry name" value="Aldolase class I"/>
    <property type="match status" value="1"/>
</dbReference>
<dbReference type="HAMAP" id="MF_01025">
    <property type="entry name" value="LeuA_type1"/>
    <property type="match status" value="1"/>
</dbReference>
<dbReference type="InterPro" id="IPR050073">
    <property type="entry name" value="2-IPM_HCS-like"/>
</dbReference>
<dbReference type="InterPro" id="IPR013709">
    <property type="entry name" value="2-isopropylmalate_synth_dimer"/>
</dbReference>
<dbReference type="InterPro" id="IPR002034">
    <property type="entry name" value="AIPM/Hcit_synth_CS"/>
</dbReference>
<dbReference type="InterPro" id="IPR013785">
    <property type="entry name" value="Aldolase_TIM"/>
</dbReference>
<dbReference type="InterPro" id="IPR054691">
    <property type="entry name" value="LeuA/HCS_post-cat"/>
</dbReference>
<dbReference type="InterPro" id="IPR036230">
    <property type="entry name" value="LeuA_allosteric_dom_sf"/>
</dbReference>
<dbReference type="InterPro" id="IPR005671">
    <property type="entry name" value="LeuA_bact_synth"/>
</dbReference>
<dbReference type="InterPro" id="IPR000891">
    <property type="entry name" value="PYR_CT"/>
</dbReference>
<dbReference type="NCBIfam" id="TIGR00973">
    <property type="entry name" value="leuA_bact"/>
    <property type="match status" value="1"/>
</dbReference>
<dbReference type="NCBIfam" id="NF002086">
    <property type="entry name" value="PRK00915.1-3"/>
    <property type="match status" value="1"/>
</dbReference>
<dbReference type="NCBIfam" id="NF002087">
    <property type="entry name" value="PRK00915.1-4"/>
    <property type="match status" value="1"/>
</dbReference>
<dbReference type="PANTHER" id="PTHR10277:SF9">
    <property type="entry name" value="2-ISOPROPYLMALATE SYNTHASE 1, CHLOROPLASTIC-RELATED"/>
    <property type="match status" value="1"/>
</dbReference>
<dbReference type="PANTHER" id="PTHR10277">
    <property type="entry name" value="HOMOCITRATE SYNTHASE-RELATED"/>
    <property type="match status" value="1"/>
</dbReference>
<dbReference type="Pfam" id="PF22617">
    <property type="entry name" value="HCS_D2"/>
    <property type="match status" value="1"/>
</dbReference>
<dbReference type="Pfam" id="PF00682">
    <property type="entry name" value="HMGL-like"/>
    <property type="match status" value="1"/>
</dbReference>
<dbReference type="Pfam" id="PF08502">
    <property type="entry name" value="LeuA_dimer"/>
    <property type="match status" value="1"/>
</dbReference>
<dbReference type="SMART" id="SM00917">
    <property type="entry name" value="LeuA_dimer"/>
    <property type="match status" value="1"/>
</dbReference>
<dbReference type="SUPFAM" id="SSF110921">
    <property type="entry name" value="2-isopropylmalate synthase LeuA, allosteric (dimerisation) domain"/>
    <property type="match status" value="1"/>
</dbReference>
<dbReference type="SUPFAM" id="SSF51569">
    <property type="entry name" value="Aldolase"/>
    <property type="match status" value="1"/>
</dbReference>
<dbReference type="PROSITE" id="PS00816">
    <property type="entry name" value="AIPM_HOMOCIT_SYNTH_2"/>
    <property type="match status" value="1"/>
</dbReference>
<dbReference type="PROSITE" id="PS50991">
    <property type="entry name" value="PYR_CT"/>
    <property type="match status" value="1"/>
</dbReference>